<sequence length="512" mass="55360">MDAGRRRLVINDCMKPERGRRSPLPRRPTRPPDERSSGIGNLAMTPAKLHMTTSLAPIAVHSPYDGSLLGSVEATDPADIDRLLATARRGAEISRNLPRHKRASILEGAAQMVESRHDAFAEIIVREAGKTIVQARKEVLRCVNTLKLSAEEAKRNAGEIVPFDAYTGSEQRQGWFTRDPLGIITAITPYNDPLNLVAHKLGPAIAGGNAVMLKPSNLTPFSAIKLVGALREAGLPEEVITISHGDRELVTAMIAAREVRMVSFTGGFATGEAISRAAGLKKLAMELGGNAPVIVMNDCDFDKAVEGCVSGAFWAAGQNCIGAQRILIQSELYGRFRDAFVAATKKLKAGDPLQEDTDVGPMISKQVAERTEAAVNEAIKAGATLLCGNYREGSLYHPTVLEGTPLTCRLWHEEVFAPVVMLAPFDTLDKGIEMANDPDYSLHAGIFTNDLNVALEAANRIEVGGVMINDSSDYRFDAMPFGGFKYGSMGREGVRFAYEDMTQPKVVCINRG</sequence>
<keyword id="KW-0521">NADP</keyword>
<keyword id="KW-0560">Oxidoreductase</keyword>
<keyword id="KW-0614">Plasmid</keyword>
<keyword id="KW-1185">Reference proteome</keyword>
<gene>
    <name type="ordered locus">NGR_a01370</name>
    <name type="ORF">y4uC</name>
</gene>
<comment type="function">
    <text>Could be a succinate-semialdehyde dehydrogenase (NADP(+)).</text>
</comment>
<comment type="pathway">
    <text>Amino-acid degradation; 4-aminobutanoate degradation.</text>
</comment>
<comment type="similarity">
    <text evidence="4">Belongs to the aldehyde dehydrogenase family.</text>
</comment>
<dbReference type="EC" id="1.2.1.-"/>
<dbReference type="EMBL" id="Z68203">
    <property type="protein sequence ID" value="CAA92404.1"/>
    <property type="molecule type" value="Genomic_DNA"/>
</dbReference>
<dbReference type="EMBL" id="U00090">
    <property type="protein sequence ID" value="AAB91875.1"/>
    <property type="molecule type" value="Genomic_DNA"/>
</dbReference>
<dbReference type="RefSeq" id="NP_444088.1">
    <property type="nucleotide sequence ID" value="NC_000914.2"/>
</dbReference>
<dbReference type="SMR" id="Q53197"/>
<dbReference type="KEGG" id="rhi:NGR_a01370"/>
<dbReference type="PATRIC" id="fig|394.7.peg.122"/>
<dbReference type="eggNOG" id="COG1012">
    <property type="taxonomic scope" value="Bacteria"/>
</dbReference>
<dbReference type="HOGENOM" id="CLU_005391_1_0_5"/>
<dbReference type="OrthoDB" id="9761688at2"/>
<dbReference type="UniPathway" id="UPA00733"/>
<dbReference type="Proteomes" id="UP000001054">
    <property type="component" value="Plasmid pNGR234a"/>
</dbReference>
<dbReference type="GO" id="GO:0008911">
    <property type="term" value="F:lactaldehyde dehydrogenase (NAD+) activity"/>
    <property type="evidence" value="ECO:0007669"/>
    <property type="project" value="TreeGrafter"/>
</dbReference>
<dbReference type="GO" id="GO:0009450">
    <property type="term" value="P:gamma-aminobutyric acid catabolic process"/>
    <property type="evidence" value="ECO:0007669"/>
    <property type="project" value="UniProtKB-UniPathway"/>
</dbReference>
<dbReference type="CDD" id="cd07149">
    <property type="entry name" value="ALDH_y4uC"/>
    <property type="match status" value="1"/>
</dbReference>
<dbReference type="Gene3D" id="3.40.605.10">
    <property type="entry name" value="Aldehyde Dehydrogenase, Chain A, domain 1"/>
    <property type="match status" value="1"/>
</dbReference>
<dbReference type="Gene3D" id="3.40.309.10">
    <property type="entry name" value="Aldehyde Dehydrogenase, Chain A, domain 2"/>
    <property type="match status" value="1"/>
</dbReference>
<dbReference type="InterPro" id="IPR016161">
    <property type="entry name" value="Ald_DH/histidinol_DH"/>
</dbReference>
<dbReference type="InterPro" id="IPR016163">
    <property type="entry name" value="Ald_DH_C"/>
</dbReference>
<dbReference type="InterPro" id="IPR029510">
    <property type="entry name" value="Ald_DH_CS_GLU"/>
</dbReference>
<dbReference type="InterPro" id="IPR016162">
    <property type="entry name" value="Ald_DH_N"/>
</dbReference>
<dbReference type="InterPro" id="IPR015590">
    <property type="entry name" value="Aldehyde_DH_dom"/>
</dbReference>
<dbReference type="InterPro" id="IPR051020">
    <property type="entry name" value="ALDH-related_metabolic_enz"/>
</dbReference>
<dbReference type="PANTHER" id="PTHR42991">
    <property type="entry name" value="ALDEHYDE DEHYDROGENASE"/>
    <property type="match status" value="1"/>
</dbReference>
<dbReference type="PANTHER" id="PTHR42991:SF1">
    <property type="entry name" value="ALDEHYDE DEHYDROGENASE"/>
    <property type="match status" value="1"/>
</dbReference>
<dbReference type="Pfam" id="PF00171">
    <property type="entry name" value="Aldedh"/>
    <property type="match status" value="1"/>
</dbReference>
<dbReference type="SUPFAM" id="SSF53720">
    <property type="entry name" value="ALDH-like"/>
    <property type="match status" value="1"/>
</dbReference>
<dbReference type="PROSITE" id="PS00687">
    <property type="entry name" value="ALDEHYDE_DEHYDR_GLU"/>
    <property type="match status" value="1"/>
</dbReference>
<protein>
    <recommendedName>
        <fullName>Putative aldehyde-dehydrogenase-like protein y4uC</fullName>
        <ecNumber>1.2.1.-</ecNumber>
    </recommendedName>
</protein>
<name>Y4UC_SINFN</name>
<geneLocation type="plasmid">
    <name>sym pNGR234a</name>
</geneLocation>
<proteinExistence type="inferred from homology"/>
<organism>
    <name type="scientific">Sinorhizobium fredii (strain NBRC 101917 / NGR234)</name>
    <dbReference type="NCBI Taxonomy" id="394"/>
    <lineage>
        <taxon>Bacteria</taxon>
        <taxon>Pseudomonadati</taxon>
        <taxon>Pseudomonadota</taxon>
        <taxon>Alphaproteobacteria</taxon>
        <taxon>Hyphomicrobiales</taxon>
        <taxon>Rhizobiaceae</taxon>
        <taxon>Sinorhizobium/Ensifer group</taxon>
        <taxon>Sinorhizobium</taxon>
    </lineage>
</organism>
<evidence type="ECO:0000250" key="1"/>
<evidence type="ECO:0000255" key="2">
    <source>
        <dbReference type="PROSITE-ProRule" id="PRU10007"/>
    </source>
</evidence>
<evidence type="ECO:0000256" key="3">
    <source>
        <dbReference type="SAM" id="MobiDB-lite"/>
    </source>
</evidence>
<evidence type="ECO:0000305" key="4"/>
<reference key="1">
    <citation type="journal article" date="1996" name="Genome Res.">
        <title>Sequencing the 500-kb GC-rich symbiotic replicon of Rhizobium sp. NGR234 using dye terminators and a thermostable 'sequenase': a beginning.</title>
        <authorList>
            <person name="Freiberg C."/>
            <person name="Perret X."/>
            <person name="Broughton W.J."/>
            <person name="Rosenthal A."/>
        </authorList>
    </citation>
    <scope>NUCLEOTIDE SEQUENCE [GENOMIC DNA]</scope>
</reference>
<reference key="2">
    <citation type="journal article" date="1997" name="Nature">
        <title>Molecular basis of symbiosis between Rhizobium and legumes.</title>
        <authorList>
            <person name="Freiberg C.A."/>
            <person name="Fellay R."/>
            <person name="Bairoch A."/>
            <person name="Broughton W.J."/>
            <person name="Rosenthal A."/>
            <person name="Perret X."/>
        </authorList>
    </citation>
    <scope>NUCLEOTIDE SEQUENCE [LARGE SCALE GENOMIC DNA]</scope>
    <source>
        <strain>NBRC 101917 / NGR234</strain>
    </source>
</reference>
<reference key="3">
    <citation type="journal article" date="2009" name="Appl. Environ. Microbiol.">
        <title>Rhizobium sp. strain NGR234 possesses a remarkable number of secretion systems.</title>
        <authorList>
            <person name="Schmeisser C."/>
            <person name="Liesegang H."/>
            <person name="Krysciak D."/>
            <person name="Bakkou N."/>
            <person name="Le Quere A."/>
            <person name="Wollherr A."/>
            <person name="Heinemeyer I."/>
            <person name="Morgenstern B."/>
            <person name="Pommerening-Roeser A."/>
            <person name="Flores M."/>
            <person name="Palacios R."/>
            <person name="Brenner S."/>
            <person name="Gottschalk G."/>
            <person name="Schmitz R.A."/>
            <person name="Broughton W.J."/>
            <person name="Perret X."/>
            <person name="Strittmatter A.W."/>
            <person name="Streit W.R."/>
        </authorList>
    </citation>
    <scope>NUCLEOTIDE SEQUENCE [LARGE SCALE GENOMIC DNA]</scope>
    <source>
        <strain>NBRC 101917 / NGR234</strain>
    </source>
</reference>
<accession>Q53197</accession>
<feature type="chain" id="PRO_0000056599" description="Putative aldehyde-dehydrogenase-like protein y4uC">
    <location>
        <begin position="1"/>
        <end position="512"/>
    </location>
</feature>
<feature type="region of interest" description="Disordered" evidence="3">
    <location>
        <begin position="14"/>
        <end position="41"/>
    </location>
</feature>
<feature type="active site" evidence="2">
    <location>
        <position position="286"/>
    </location>
</feature>
<feature type="active site" evidence="2">
    <location>
        <position position="320"/>
    </location>
</feature>
<feature type="binding site" evidence="1">
    <location>
        <begin position="266"/>
        <end position="271"/>
    </location>
    <ligand>
        <name>NADP(+)</name>
        <dbReference type="ChEBI" id="CHEBI:58349"/>
    </ligand>
</feature>